<reference key="1">
    <citation type="journal article" date="1999" name="Mol. Cell. Biol.">
        <title>A new member of the Sin3 family of corepressors is essential for cell viability and required for retroelement propagation in fission yeast.</title>
        <authorList>
            <person name="Dang V.D."/>
            <person name="Benedik M.J."/>
            <person name="Ekwall K."/>
            <person name="Choi J."/>
            <person name="Allshire R.C."/>
            <person name="Levin H.L."/>
        </authorList>
    </citation>
    <scope>NUCLEOTIDE SEQUENCE [GENOMIC DNA]</scope>
    <scope>CHARACTERIZATION</scope>
</reference>
<reference key="2">
    <citation type="journal article" date="2002" name="Nature">
        <title>The genome sequence of Schizosaccharomyces pombe.</title>
        <authorList>
            <person name="Wood V."/>
            <person name="Gwilliam R."/>
            <person name="Rajandream M.A."/>
            <person name="Lyne M.H."/>
            <person name="Lyne R."/>
            <person name="Stewart A."/>
            <person name="Sgouros J.G."/>
            <person name="Peat N."/>
            <person name="Hayles J."/>
            <person name="Baker S.G."/>
            <person name="Basham D."/>
            <person name="Bowman S."/>
            <person name="Brooks K."/>
            <person name="Brown D."/>
            <person name="Brown S."/>
            <person name="Chillingworth T."/>
            <person name="Churcher C.M."/>
            <person name="Collins M."/>
            <person name="Connor R."/>
            <person name="Cronin A."/>
            <person name="Davis P."/>
            <person name="Feltwell T."/>
            <person name="Fraser A."/>
            <person name="Gentles S."/>
            <person name="Goble A."/>
            <person name="Hamlin N."/>
            <person name="Harris D.E."/>
            <person name="Hidalgo J."/>
            <person name="Hodgson G."/>
            <person name="Holroyd S."/>
            <person name="Hornsby T."/>
            <person name="Howarth S."/>
            <person name="Huckle E.J."/>
            <person name="Hunt S."/>
            <person name="Jagels K."/>
            <person name="James K.D."/>
            <person name="Jones L."/>
            <person name="Jones M."/>
            <person name="Leather S."/>
            <person name="McDonald S."/>
            <person name="McLean J."/>
            <person name="Mooney P."/>
            <person name="Moule S."/>
            <person name="Mungall K.L."/>
            <person name="Murphy L.D."/>
            <person name="Niblett D."/>
            <person name="Odell C."/>
            <person name="Oliver K."/>
            <person name="O'Neil S."/>
            <person name="Pearson D."/>
            <person name="Quail M.A."/>
            <person name="Rabbinowitsch E."/>
            <person name="Rutherford K.M."/>
            <person name="Rutter S."/>
            <person name="Saunders D."/>
            <person name="Seeger K."/>
            <person name="Sharp S."/>
            <person name="Skelton J."/>
            <person name="Simmonds M.N."/>
            <person name="Squares R."/>
            <person name="Squares S."/>
            <person name="Stevens K."/>
            <person name="Taylor K."/>
            <person name="Taylor R.G."/>
            <person name="Tivey A."/>
            <person name="Walsh S.V."/>
            <person name="Warren T."/>
            <person name="Whitehead S."/>
            <person name="Woodward J.R."/>
            <person name="Volckaert G."/>
            <person name="Aert R."/>
            <person name="Robben J."/>
            <person name="Grymonprez B."/>
            <person name="Weltjens I."/>
            <person name="Vanstreels E."/>
            <person name="Rieger M."/>
            <person name="Schaefer M."/>
            <person name="Mueller-Auer S."/>
            <person name="Gabel C."/>
            <person name="Fuchs M."/>
            <person name="Duesterhoeft A."/>
            <person name="Fritzc C."/>
            <person name="Holzer E."/>
            <person name="Moestl D."/>
            <person name="Hilbert H."/>
            <person name="Borzym K."/>
            <person name="Langer I."/>
            <person name="Beck A."/>
            <person name="Lehrach H."/>
            <person name="Reinhardt R."/>
            <person name="Pohl T.M."/>
            <person name="Eger P."/>
            <person name="Zimmermann W."/>
            <person name="Wedler H."/>
            <person name="Wambutt R."/>
            <person name="Purnelle B."/>
            <person name="Goffeau A."/>
            <person name="Cadieu E."/>
            <person name="Dreano S."/>
            <person name="Gloux S."/>
            <person name="Lelaure V."/>
            <person name="Mottier S."/>
            <person name="Galibert F."/>
            <person name="Aves S.J."/>
            <person name="Xiang Z."/>
            <person name="Hunt C."/>
            <person name="Moore K."/>
            <person name="Hurst S.M."/>
            <person name="Lucas M."/>
            <person name="Rochet M."/>
            <person name="Gaillardin C."/>
            <person name="Tallada V.A."/>
            <person name="Garzon A."/>
            <person name="Thode G."/>
            <person name="Daga R.R."/>
            <person name="Cruzado L."/>
            <person name="Jimenez J."/>
            <person name="Sanchez M."/>
            <person name="del Rey F."/>
            <person name="Benito J."/>
            <person name="Dominguez A."/>
            <person name="Revuelta J.L."/>
            <person name="Moreno S."/>
            <person name="Armstrong J."/>
            <person name="Forsburg S.L."/>
            <person name="Cerutti L."/>
            <person name="Lowe T."/>
            <person name="McCombie W.R."/>
            <person name="Paulsen I."/>
            <person name="Potashkin J."/>
            <person name="Shpakovski G.V."/>
            <person name="Ussery D."/>
            <person name="Barrell B.G."/>
            <person name="Nurse P."/>
        </authorList>
    </citation>
    <scope>NUCLEOTIDE SEQUENCE [LARGE SCALE GENOMIC DNA]</scope>
    <source>
        <strain>972 / ATCC 24843</strain>
    </source>
</reference>
<reference key="3">
    <citation type="journal article" date="2003" name="EMBO J.">
        <title>Alp13, an MRG family protein, is a component of fission yeast Clr6 histone deacetylase required for genomic integrity.</title>
        <authorList>
            <person name="Nakayama J."/>
            <person name="Xiao G."/>
            <person name="Noma K."/>
            <person name="Malikzay A."/>
            <person name="Bjerling P."/>
            <person name="Ekwall K."/>
            <person name="Kobayashi R."/>
            <person name="Grewal S.I.S."/>
        </authorList>
    </citation>
    <scope>PROTEIN SEQUENCE OF 133-155; 179-193; 489-500; 655-664; 772-781; 901-915; 933-946; 1364-1373 AND 1454-1468</scope>
</reference>
<reference key="4">
    <citation type="journal article" date="2008" name="J. Proteome Res.">
        <title>Phosphoproteome analysis of fission yeast.</title>
        <authorList>
            <person name="Wilson-Grady J.T."/>
            <person name="Villen J."/>
            <person name="Gygi S.P."/>
        </authorList>
    </citation>
    <scope>PHOSPHORYLATION [LARGE SCALE ANALYSIS] AT SER-442; THR-446 AND SER-1443</scope>
    <scope>IDENTIFICATION BY MASS SPECTROMETRY</scope>
</reference>
<gene>
    <name type="primary">pst1</name>
    <name type="ORF">SPBC12C2.10c</name>
    <name type="ORF">SPBC21D10.01c</name>
</gene>
<feature type="chain" id="PRO_0000121541" description="Paired amphipathic helix protein pst1">
    <location>
        <begin position="1"/>
        <end position="1522"/>
    </location>
</feature>
<feature type="domain" description="PAH 1" evidence="1">
    <location>
        <begin position="178"/>
        <end position="248"/>
    </location>
</feature>
<feature type="domain" description="PAH 2" evidence="1">
    <location>
        <begin position="345"/>
        <end position="415"/>
    </location>
</feature>
<feature type="domain" description="PAH 3" evidence="1">
    <location>
        <begin position="504"/>
        <end position="576"/>
    </location>
</feature>
<feature type="region of interest" description="Disordered" evidence="2">
    <location>
        <begin position="139"/>
        <end position="174"/>
    </location>
</feature>
<feature type="region of interest" description="Disordered" evidence="2">
    <location>
        <begin position="307"/>
        <end position="339"/>
    </location>
</feature>
<feature type="region of interest" description="Disordered" evidence="2">
    <location>
        <begin position="422"/>
        <end position="504"/>
    </location>
</feature>
<feature type="region of interest" description="Disordered" evidence="2">
    <location>
        <begin position="928"/>
        <end position="968"/>
    </location>
</feature>
<feature type="region of interest" description="Disordered" evidence="2">
    <location>
        <begin position="1343"/>
        <end position="1522"/>
    </location>
</feature>
<feature type="compositionally biased region" description="Pro residues" evidence="2">
    <location>
        <begin position="328"/>
        <end position="337"/>
    </location>
</feature>
<feature type="compositionally biased region" description="Polar residues" evidence="2">
    <location>
        <begin position="426"/>
        <end position="441"/>
    </location>
</feature>
<feature type="compositionally biased region" description="Low complexity" evidence="2">
    <location>
        <begin position="442"/>
        <end position="468"/>
    </location>
</feature>
<feature type="compositionally biased region" description="Basic and acidic residues" evidence="2">
    <location>
        <begin position="928"/>
        <end position="960"/>
    </location>
</feature>
<feature type="compositionally biased region" description="Polar residues" evidence="2">
    <location>
        <begin position="1385"/>
        <end position="1398"/>
    </location>
</feature>
<feature type="compositionally biased region" description="Basic and acidic residues" evidence="2">
    <location>
        <begin position="1403"/>
        <end position="1432"/>
    </location>
</feature>
<feature type="compositionally biased region" description="Basic and acidic residues" evidence="2">
    <location>
        <begin position="1461"/>
        <end position="1474"/>
    </location>
</feature>
<feature type="compositionally biased region" description="Polar residues" evidence="2">
    <location>
        <begin position="1478"/>
        <end position="1487"/>
    </location>
</feature>
<feature type="compositionally biased region" description="Acidic residues" evidence="2">
    <location>
        <begin position="1488"/>
        <end position="1522"/>
    </location>
</feature>
<feature type="modified residue" description="Phosphoserine" evidence="3">
    <location>
        <position position="442"/>
    </location>
</feature>
<feature type="modified residue" description="Phosphothreonine" evidence="3">
    <location>
        <position position="446"/>
    </location>
</feature>
<feature type="modified residue" description="Phosphoserine" evidence="3">
    <location>
        <position position="1443"/>
    </location>
</feature>
<feature type="strand" evidence="4">
    <location>
        <begin position="506"/>
        <end position="508"/>
    </location>
</feature>
<feature type="helix" evidence="4">
    <location>
        <begin position="512"/>
        <end position="521"/>
    </location>
</feature>
<feature type="turn" evidence="4">
    <location>
        <begin position="522"/>
        <end position="524"/>
    </location>
</feature>
<feature type="turn" evidence="4">
    <location>
        <begin position="529"/>
        <end position="531"/>
    </location>
</feature>
<feature type="helix" evidence="4">
    <location>
        <begin position="532"/>
        <end position="542"/>
    </location>
</feature>
<feature type="helix" evidence="4">
    <location>
        <begin position="548"/>
        <end position="558"/>
    </location>
</feature>
<feature type="strand" evidence="4">
    <location>
        <begin position="559"/>
        <end position="561"/>
    </location>
</feature>
<feature type="helix" evidence="4">
    <location>
        <begin position="563"/>
        <end position="572"/>
    </location>
</feature>
<feature type="helix" evidence="4">
    <location>
        <begin position="590"/>
        <end position="592"/>
    </location>
</feature>
<feature type="strand" evidence="4">
    <location>
        <begin position="595"/>
        <end position="602"/>
    </location>
</feature>
<feature type="helix" evidence="4">
    <location>
        <begin position="605"/>
        <end position="609"/>
    </location>
</feature>
<feature type="helix" evidence="4">
    <location>
        <begin position="619"/>
        <end position="622"/>
    </location>
</feature>
<feature type="strand" evidence="4">
    <location>
        <begin position="626"/>
        <end position="629"/>
    </location>
</feature>
<feature type="helix" evidence="4">
    <location>
        <begin position="647"/>
        <end position="683"/>
    </location>
</feature>
<feature type="helix" evidence="4">
    <location>
        <begin position="690"/>
        <end position="692"/>
    </location>
</feature>
<feature type="turn" evidence="4">
    <location>
        <begin position="698"/>
        <end position="701"/>
    </location>
</feature>
<feature type="helix" evidence="4">
    <location>
        <begin position="705"/>
        <end position="716"/>
    </location>
</feature>
<feature type="helix" evidence="4">
    <location>
        <begin position="721"/>
        <end position="730"/>
    </location>
</feature>
<feature type="helix" evidence="4">
    <location>
        <begin position="732"/>
        <end position="769"/>
    </location>
</feature>
<feature type="helix" evidence="4">
    <location>
        <begin position="770"/>
        <end position="772"/>
    </location>
</feature>
<feature type="turn" evidence="4">
    <location>
        <begin position="775"/>
        <end position="778"/>
    </location>
</feature>
<feature type="helix" evidence="4">
    <location>
        <begin position="783"/>
        <end position="786"/>
    </location>
</feature>
<feature type="helix" evidence="4">
    <location>
        <begin position="790"/>
        <end position="809"/>
    </location>
</feature>
<feature type="strand" evidence="4">
    <location>
        <begin position="818"/>
        <end position="822"/>
    </location>
</feature>
<feature type="helix" evidence="4">
    <location>
        <begin position="828"/>
        <end position="841"/>
    </location>
</feature>
<feature type="strand" evidence="4">
    <location>
        <begin position="844"/>
        <end position="846"/>
    </location>
</feature>
<feature type="helix" evidence="4">
    <location>
        <begin position="848"/>
        <end position="865"/>
    </location>
</feature>
<feature type="helix" evidence="4">
    <location>
        <begin position="870"/>
        <end position="873"/>
    </location>
</feature>
<feature type="turn" evidence="4">
    <location>
        <begin position="874"/>
        <end position="876"/>
    </location>
</feature>
<feature type="strand" evidence="4">
    <location>
        <begin position="1001"/>
        <end position="1006"/>
    </location>
</feature>
<feature type="helix" evidence="4">
    <location>
        <begin position="1008"/>
        <end position="1038"/>
    </location>
</feature>
<feature type="helix" evidence="4">
    <location>
        <begin position="1045"/>
        <end position="1049"/>
    </location>
</feature>
<feature type="strand" evidence="4">
    <location>
        <begin position="1058"/>
        <end position="1062"/>
    </location>
</feature>
<feature type="helix" evidence="4">
    <location>
        <begin position="1070"/>
        <end position="1083"/>
    </location>
</feature>
<feature type="helix" evidence="4">
    <location>
        <begin position="1088"/>
        <end position="1099"/>
    </location>
</feature>
<feature type="helix" evidence="4">
    <location>
        <begin position="1104"/>
        <end position="1108"/>
    </location>
</feature>
<feature type="helix" evidence="4">
    <location>
        <begin position="1109"/>
        <end position="1123"/>
    </location>
</feature>
<feature type="helix" evidence="4">
    <location>
        <begin position="1127"/>
        <end position="1141"/>
    </location>
</feature>
<feature type="helix" evidence="4">
    <location>
        <begin position="1147"/>
        <end position="1161"/>
    </location>
</feature>
<feature type="strand" evidence="4">
    <location>
        <begin position="1163"/>
        <end position="1165"/>
    </location>
</feature>
<feature type="strand" evidence="4">
    <location>
        <begin position="1167"/>
        <end position="1173"/>
    </location>
</feature>
<feature type="turn" evidence="4">
    <location>
        <begin position="1174"/>
        <end position="1177"/>
    </location>
</feature>
<feature type="strand" evidence="4">
    <location>
        <begin position="1178"/>
        <end position="1184"/>
    </location>
</feature>
<feature type="helix" evidence="4">
    <location>
        <begin position="1197"/>
        <end position="1206"/>
    </location>
</feature>
<feature type="turn" evidence="4">
    <location>
        <begin position="1207"/>
        <end position="1209"/>
    </location>
</feature>
<feature type="strand" evidence="4">
    <location>
        <begin position="1210"/>
        <end position="1212"/>
    </location>
</feature>
<feature type="strand" evidence="4">
    <location>
        <begin position="1215"/>
        <end position="1217"/>
    </location>
</feature>
<sequence>MAKDWQDARLGQCHRLEDYSNVAINYTGPYLTPSGTMAYHPGNAPLFTQAPPHTNPQGPPPFPLFNSISPVYDPATGRLLYRNVNTQVSHTAIPNPANGYAAVYGGPPSQLPPPPQPQSHPNVTVISASPARAIEQQPTILSSTDSNIPRPGTVKSSASPFVPNQNPSAPPPPPQEYRQLNVTDALSYLDLVKLQFHQEPEIYNEFLDIMKEFKSQAIETPEVITRVSKLFAGYPNLIQGFNTFLPPGYSIEISSADPGSLAGIHITTPQGPLMINDLGKTTAPPPPHGSTTPLPAAASYTSMNMKQSSASHPVLQPPAPSTLQFNPSPSPAAPSYPPVDASVKQAADLDQAINFVNNVKNRFSHKPEAYNSFLDILKSYQHDQRPIQLVYFQVSQLFAEAPDLLEEFKRFLPDVSVNAPAETQDKSTVVPQESATATPKRSPSATPTSALPPIGKFAPPTTAKAQPAPEKRRGEPAVQTRNHSKRTRTATSSVEETTPRAFNVPIAQNKNPSELEFLEHARQYLANESKYNEFIKLLELYSQEVFDKNALVERCYVFFGSNEHLMNWLKDLVKYNPANPIPVPRPRVDLTQCKSCGPSYRLLPKIELLLPCSGRDDLCWTILNDAWVSFPTLASEDSGFIAHRKNQFEENLHKLEEERYEYDRHIGANMRFIELLQIHADKMLKMSEVEKANWTLPSNLGGKSVSIYHKVIKKVYGKEHAQQIIENLQKNPSVTIPIVLERLKKKDREWRSLQNHWNELWHDIEEKNFYRSLDHQGVSFKSVDKKSTTPKFLISELRNLAQQQKVELSEGKVTPSHQFLFSYKDPNIITDIARLFGVFLIHGSTHSAEDNEKMSNFLRSFLSLFFDVPYDSFIPYLPTHFNEEESDIDSLSSSLIEKPRASSSPIHHANNNGLRLLKDVLKKTYRGARENRSSVKEDYVSESTERTPDASEIDEHISEHEENDDESSSVFSTGEVWVNCKFTDTDGSLLDDGTKLSDRSVYNLFGNMSLYCFFRLFHTLYSRLEEIKNLEQMAYSKQHDVKSNPVAVELGLVRHPSERLGFALPTADTVYEQAIQLCERLMEGEIDQNGFEDALRCLYGIHAFRLYTVEKLVTSIIKQLHSVTTNRRLAQVFMYYEKDRVQRRTSPRQQIMYRIQTETAFGPDENLCCIDWNSQTRQSAIRLMGREDLTMGTLKSDAEKWCYYIGSYIMSSPTEGILPEHVRIPFLRKCLPSDEGNEDDESSSVVKSANAIITSFLESGLALTIPINTVKIRYENGTEDVFARNSEQVYNGPYDKIRDYRQSKWREWLNSDEGWTQGLSKDKVRRIKPCTIESLFNESTLRSGKAERFSENAGVESIGKKGKNLLNESGNGKKLDKGLPPKVNGKSSVTRGNKTNLKARNGRNNDDSSNKINLSEKEKEKESIEDEEKNREGSMSPVAKHASDVEDDHDVAKSTAPDFETSSHRPERSSEKKSPSPVFTSVKQTAENDADNEDDKTDMDDQTEETLDADNTMEEEPSKDDL</sequence>
<proteinExistence type="evidence at protein level"/>
<evidence type="ECO:0000255" key="1">
    <source>
        <dbReference type="PROSITE-ProRule" id="PRU00810"/>
    </source>
</evidence>
<evidence type="ECO:0000256" key="2">
    <source>
        <dbReference type="SAM" id="MobiDB-lite"/>
    </source>
</evidence>
<evidence type="ECO:0000269" key="3">
    <source>
    </source>
</evidence>
<evidence type="ECO:0007829" key="4">
    <source>
        <dbReference type="PDB" id="8I03"/>
    </source>
</evidence>
<accession>Q09750</accession>
<protein>
    <recommendedName>
        <fullName>Paired amphipathic helix protein pst1</fullName>
    </recommendedName>
    <alternativeName>
        <fullName>SIN3 homolog 1</fullName>
    </alternativeName>
</protein>
<dbReference type="EMBL" id="AF280407">
    <property type="protein sequence ID" value="AAF90180.1"/>
    <property type="molecule type" value="Genomic_DNA"/>
</dbReference>
<dbReference type="EMBL" id="CU329671">
    <property type="protein sequence ID" value="CAA20757.2"/>
    <property type="molecule type" value="Genomic_DNA"/>
</dbReference>
<dbReference type="PIR" id="T39371">
    <property type="entry name" value="T39371"/>
</dbReference>
<dbReference type="RefSeq" id="NP_596012.2">
    <property type="nucleotide sequence ID" value="NM_001021920.2"/>
</dbReference>
<dbReference type="PDB" id="8I03">
    <property type="method" value="EM"/>
    <property type="resolution" value="3.20 A"/>
    <property type="chains" value="A=1-1522"/>
</dbReference>
<dbReference type="PDBsum" id="8I03"/>
<dbReference type="EMDB" id="EMD-35093"/>
<dbReference type="SMR" id="Q09750"/>
<dbReference type="BioGRID" id="276562">
    <property type="interactions" value="9"/>
</dbReference>
<dbReference type="ComplexPortal" id="CPX-9129">
    <property type="entry name" value="RPD3L histone deacetylase complex"/>
</dbReference>
<dbReference type="DIP" id="DIP-29340N"/>
<dbReference type="FunCoup" id="Q09750">
    <property type="interactions" value="773"/>
</dbReference>
<dbReference type="IntAct" id="Q09750">
    <property type="interactions" value="4"/>
</dbReference>
<dbReference type="STRING" id="284812.Q09750"/>
<dbReference type="iPTMnet" id="Q09750"/>
<dbReference type="PaxDb" id="4896-SPBC12C2.10c.1"/>
<dbReference type="EnsemblFungi" id="SPBC12C2.10c.1">
    <property type="protein sequence ID" value="SPBC12C2.10c.1:pep"/>
    <property type="gene ID" value="SPBC12C2.10c"/>
</dbReference>
<dbReference type="GeneID" id="2540018"/>
<dbReference type="KEGG" id="spo:2540018"/>
<dbReference type="PomBase" id="SPBC12C2.10c">
    <property type="gene designation" value="pst1"/>
</dbReference>
<dbReference type="VEuPathDB" id="FungiDB:SPBC12C2.10c"/>
<dbReference type="eggNOG" id="KOG4204">
    <property type="taxonomic scope" value="Eukaryota"/>
</dbReference>
<dbReference type="HOGENOM" id="CLU_001360_2_4_1"/>
<dbReference type="InParanoid" id="Q09750"/>
<dbReference type="OMA" id="MCEEVIK"/>
<dbReference type="PhylomeDB" id="Q09750"/>
<dbReference type="PRO" id="PR:Q09750"/>
<dbReference type="Proteomes" id="UP000002485">
    <property type="component" value="Chromosome II"/>
</dbReference>
<dbReference type="GO" id="GO:0000785">
    <property type="term" value="C:chromatin"/>
    <property type="evidence" value="ECO:0000318"/>
    <property type="project" value="GO_Central"/>
</dbReference>
<dbReference type="GO" id="GO:0005634">
    <property type="term" value="C:nucleus"/>
    <property type="evidence" value="ECO:0000314"/>
    <property type="project" value="PomBase"/>
</dbReference>
<dbReference type="GO" id="GO:0005721">
    <property type="term" value="C:pericentric heterochromatin"/>
    <property type="evidence" value="ECO:0000314"/>
    <property type="project" value="PomBase"/>
</dbReference>
<dbReference type="GO" id="GO:0033698">
    <property type="term" value="C:Rpd3L complex"/>
    <property type="evidence" value="ECO:0000314"/>
    <property type="project" value="PomBase"/>
</dbReference>
<dbReference type="GO" id="GO:0070210">
    <property type="term" value="C:Rpd3L-Expanded complex"/>
    <property type="evidence" value="ECO:0000314"/>
    <property type="project" value="PomBase"/>
</dbReference>
<dbReference type="GO" id="GO:0070822">
    <property type="term" value="C:Sin3-type complex"/>
    <property type="evidence" value="ECO:0000318"/>
    <property type="project" value="GO_Central"/>
</dbReference>
<dbReference type="GO" id="GO:0003714">
    <property type="term" value="F:transcription corepressor activity"/>
    <property type="evidence" value="ECO:0000318"/>
    <property type="project" value="GO_Central"/>
</dbReference>
<dbReference type="GO" id="GO:0051301">
    <property type="term" value="P:cell division"/>
    <property type="evidence" value="ECO:0007669"/>
    <property type="project" value="UniProtKB-KW"/>
</dbReference>
<dbReference type="GO" id="GO:0000122">
    <property type="term" value="P:negative regulation of transcription by RNA polymerase II"/>
    <property type="evidence" value="ECO:0000318"/>
    <property type="project" value="GO_Central"/>
</dbReference>
<dbReference type="GO" id="GO:0031508">
    <property type="term" value="P:pericentric heterochromatin formation"/>
    <property type="evidence" value="ECO:0000315"/>
    <property type="project" value="PomBase"/>
</dbReference>
<dbReference type="GO" id="GO:0045815">
    <property type="term" value="P:transcription initiation-coupled chromatin remodeling"/>
    <property type="evidence" value="ECO:0000305"/>
    <property type="project" value="PomBase"/>
</dbReference>
<dbReference type="FunFam" id="1.20.1160.11:FF:000002">
    <property type="entry name" value="Paired amphipathic helix protein SIN3"/>
    <property type="match status" value="1"/>
</dbReference>
<dbReference type="FunFam" id="1.20.1160.11:FF:000001">
    <property type="entry name" value="Paired amphipathic helix protein Sin3"/>
    <property type="match status" value="1"/>
</dbReference>
<dbReference type="FunFam" id="1.20.1160.11:FF:000003">
    <property type="entry name" value="Paired amphipathic helix SIN3-like protein"/>
    <property type="match status" value="1"/>
</dbReference>
<dbReference type="Gene3D" id="1.20.1160.11">
    <property type="entry name" value="Paired amphipathic helix"/>
    <property type="match status" value="3"/>
</dbReference>
<dbReference type="InterPro" id="IPR013194">
    <property type="entry name" value="HDAC_interact_dom"/>
</dbReference>
<dbReference type="InterPro" id="IPR003822">
    <property type="entry name" value="PAH"/>
</dbReference>
<dbReference type="InterPro" id="IPR036600">
    <property type="entry name" value="PAH_sf"/>
</dbReference>
<dbReference type="InterPro" id="IPR039774">
    <property type="entry name" value="Sin3-like"/>
</dbReference>
<dbReference type="InterPro" id="IPR031693">
    <property type="entry name" value="Sin3_C"/>
</dbReference>
<dbReference type="PANTHER" id="PTHR12346:SF0">
    <property type="entry name" value="SIN3A, ISOFORM G"/>
    <property type="match status" value="1"/>
</dbReference>
<dbReference type="PANTHER" id="PTHR12346">
    <property type="entry name" value="SIN3B-RELATED"/>
    <property type="match status" value="1"/>
</dbReference>
<dbReference type="Pfam" id="PF02671">
    <property type="entry name" value="PAH"/>
    <property type="match status" value="3"/>
</dbReference>
<dbReference type="Pfam" id="PF08295">
    <property type="entry name" value="Sin3_corepress"/>
    <property type="match status" value="1"/>
</dbReference>
<dbReference type="Pfam" id="PF16879">
    <property type="entry name" value="Sin3a_C"/>
    <property type="match status" value="1"/>
</dbReference>
<dbReference type="SMART" id="SM00761">
    <property type="entry name" value="HDAC_interact"/>
    <property type="match status" value="1"/>
</dbReference>
<dbReference type="SUPFAM" id="SSF47762">
    <property type="entry name" value="PAH2 domain"/>
    <property type="match status" value="3"/>
</dbReference>
<dbReference type="PROSITE" id="PS51477">
    <property type="entry name" value="PAH"/>
    <property type="match status" value="3"/>
</dbReference>
<organism>
    <name type="scientific">Schizosaccharomyces pombe (strain 972 / ATCC 24843)</name>
    <name type="common">Fission yeast</name>
    <dbReference type="NCBI Taxonomy" id="284812"/>
    <lineage>
        <taxon>Eukaryota</taxon>
        <taxon>Fungi</taxon>
        <taxon>Dikarya</taxon>
        <taxon>Ascomycota</taxon>
        <taxon>Taphrinomycotina</taxon>
        <taxon>Schizosaccharomycetes</taxon>
        <taxon>Schizosaccharomycetales</taxon>
        <taxon>Schizosaccharomycetaceae</taxon>
        <taxon>Schizosaccharomyces</taxon>
    </lineage>
</organism>
<keyword id="KW-0002">3D-structure</keyword>
<keyword id="KW-0010">Activator</keyword>
<keyword id="KW-0131">Cell cycle</keyword>
<keyword id="KW-0132">Cell division</keyword>
<keyword id="KW-0903">Direct protein sequencing</keyword>
<keyword id="KW-0539">Nucleus</keyword>
<keyword id="KW-0597">Phosphoprotein</keyword>
<keyword id="KW-1185">Reference proteome</keyword>
<keyword id="KW-0677">Repeat</keyword>
<keyword id="KW-0678">Repressor</keyword>
<keyword id="KW-0804">Transcription</keyword>
<keyword id="KW-0805">Transcription regulation</keyword>
<comment type="function">
    <text>Has a role in modulating the nuclear import of TF1 virus-like particles. Essential for viability.</text>
</comment>
<comment type="subcellular location">
    <subcellularLocation>
        <location>Nucleus</location>
    </subcellularLocation>
</comment>
<name>PST1_SCHPO</name>